<dbReference type="EMBL" id="CP001056">
    <property type="protein sequence ID" value="ACD22914.1"/>
    <property type="molecule type" value="Genomic_DNA"/>
</dbReference>
<dbReference type="SMR" id="B2TP90"/>
<dbReference type="KEGG" id="cbk:CLL_A2860"/>
<dbReference type="PATRIC" id="fig|935198.13.peg.2821"/>
<dbReference type="HOGENOM" id="CLU_022916_0_0_9"/>
<dbReference type="Proteomes" id="UP000001195">
    <property type="component" value="Chromosome"/>
</dbReference>
<dbReference type="GO" id="GO:0045259">
    <property type="term" value="C:proton-transporting ATP synthase complex"/>
    <property type="evidence" value="ECO:0007669"/>
    <property type="project" value="UniProtKB-ARBA"/>
</dbReference>
<dbReference type="GO" id="GO:0005524">
    <property type="term" value="F:ATP binding"/>
    <property type="evidence" value="ECO:0007669"/>
    <property type="project" value="UniProtKB-UniRule"/>
</dbReference>
<dbReference type="GO" id="GO:0046933">
    <property type="term" value="F:proton-transporting ATP synthase activity, rotational mechanism"/>
    <property type="evidence" value="ECO:0007669"/>
    <property type="project" value="UniProtKB-UniRule"/>
</dbReference>
<dbReference type="GO" id="GO:0042777">
    <property type="term" value="P:proton motive force-driven plasma membrane ATP synthesis"/>
    <property type="evidence" value="ECO:0007669"/>
    <property type="project" value="UniProtKB-UniRule"/>
</dbReference>
<dbReference type="CDD" id="cd18112">
    <property type="entry name" value="ATP-synt_V_A-type_beta_C"/>
    <property type="match status" value="1"/>
</dbReference>
<dbReference type="CDD" id="cd18118">
    <property type="entry name" value="ATP-synt_V_A-type_beta_N"/>
    <property type="match status" value="1"/>
</dbReference>
<dbReference type="CDD" id="cd01135">
    <property type="entry name" value="V_A-ATPase_B"/>
    <property type="match status" value="1"/>
</dbReference>
<dbReference type="Gene3D" id="3.40.50.12240">
    <property type="match status" value="1"/>
</dbReference>
<dbReference type="HAMAP" id="MF_00310">
    <property type="entry name" value="ATP_synth_B_arch"/>
    <property type="match status" value="1"/>
</dbReference>
<dbReference type="InterPro" id="IPR055190">
    <property type="entry name" value="ATP-synt_VA_C"/>
</dbReference>
<dbReference type="InterPro" id="IPR020003">
    <property type="entry name" value="ATPase_a/bsu_AS"/>
</dbReference>
<dbReference type="InterPro" id="IPR004100">
    <property type="entry name" value="ATPase_F1/V1/A1_a/bsu_N"/>
</dbReference>
<dbReference type="InterPro" id="IPR036121">
    <property type="entry name" value="ATPase_F1/V1/A1_a/bsu_N_sf"/>
</dbReference>
<dbReference type="InterPro" id="IPR000194">
    <property type="entry name" value="ATPase_F1/V1/A1_a/bsu_nucl-bd"/>
</dbReference>
<dbReference type="InterPro" id="IPR027417">
    <property type="entry name" value="P-loop_NTPase"/>
</dbReference>
<dbReference type="InterPro" id="IPR022879">
    <property type="entry name" value="V-ATPase_su_B/beta"/>
</dbReference>
<dbReference type="NCBIfam" id="NF003235">
    <property type="entry name" value="PRK04196.1"/>
    <property type="match status" value="1"/>
</dbReference>
<dbReference type="PANTHER" id="PTHR43389">
    <property type="entry name" value="V-TYPE PROTON ATPASE SUBUNIT B"/>
    <property type="match status" value="1"/>
</dbReference>
<dbReference type="PANTHER" id="PTHR43389:SF4">
    <property type="entry name" value="V-TYPE PROTON ATPASE SUBUNIT B"/>
    <property type="match status" value="1"/>
</dbReference>
<dbReference type="Pfam" id="PF00006">
    <property type="entry name" value="ATP-synt_ab"/>
    <property type="match status" value="1"/>
</dbReference>
<dbReference type="Pfam" id="PF02874">
    <property type="entry name" value="ATP-synt_ab_N"/>
    <property type="match status" value="1"/>
</dbReference>
<dbReference type="Pfam" id="PF22919">
    <property type="entry name" value="ATP-synt_VA_C"/>
    <property type="match status" value="1"/>
</dbReference>
<dbReference type="PIRSF" id="PIRSF039114">
    <property type="entry name" value="V-ATPsynth_beta/V-ATPase_B"/>
    <property type="match status" value="1"/>
</dbReference>
<dbReference type="SUPFAM" id="SSF47917">
    <property type="entry name" value="C-terminal domain of alpha and beta subunits of F1 ATP synthase"/>
    <property type="match status" value="1"/>
</dbReference>
<dbReference type="SUPFAM" id="SSF50615">
    <property type="entry name" value="N-terminal domain of alpha and beta subunits of F1 ATP synthase"/>
    <property type="match status" value="1"/>
</dbReference>
<dbReference type="SUPFAM" id="SSF52540">
    <property type="entry name" value="P-loop containing nucleoside triphosphate hydrolases"/>
    <property type="match status" value="1"/>
</dbReference>
<dbReference type="PROSITE" id="PS00152">
    <property type="entry name" value="ATPASE_ALPHA_BETA"/>
    <property type="match status" value="1"/>
</dbReference>
<feature type="chain" id="PRO_1000115655" description="V-type ATP synthase beta chain">
    <location>
        <begin position="1"/>
        <end position="459"/>
    </location>
</feature>
<name>VATB_CLOBB</name>
<reference key="1">
    <citation type="submission" date="2008-04" db="EMBL/GenBank/DDBJ databases">
        <title>Complete sequence of Clostridium botulinum strain Eklund.</title>
        <authorList>
            <person name="Brinkac L.M."/>
            <person name="Brown J.L."/>
            <person name="Bruce D."/>
            <person name="Detter C."/>
            <person name="Munk C."/>
            <person name="Smith L.A."/>
            <person name="Smith T.J."/>
            <person name="Sutton G."/>
            <person name="Brettin T.S."/>
        </authorList>
    </citation>
    <scope>NUCLEOTIDE SEQUENCE [LARGE SCALE GENOMIC DNA]</scope>
    <source>
        <strain>Eklund 17B / Type B</strain>
    </source>
</reference>
<gene>
    <name evidence="1" type="primary">atpB</name>
    <name type="ordered locus">CLL_A2860</name>
</gene>
<accession>B2TP90</accession>
<organism>
    <name type="scientific">Clostridium botulinum (strain Eklund 17B / Type B)</name>
    <dbReference type="NCBI Taxonomy" id="935198"/>
    <lineage>
        <taxon>Bacteria</taxon>
        <taxon>Bacillati</taxon>
        <taxon>Bacillota</taxon>
        <taxon>Clostridia</taxon>
        <taxon>Eubacteriales</taxon>
        <taxon>Clostridiaceae</taxon>
        <taxon>Clostridium</taxon>
    </lineage>
</organism>
<proteinExistence type="inferred from homology"/>
<comment type="function">
    <text evidence="1">Produces ATP from ADP in the presence of a proton gradient across the membrane. The V-type beta chain is a regulatory subunit.</text>
</comment>
<comment type="similarity">
    <text evidence="1">Belongs to the ATPase alpha/beta chains family.</text>
</comment>
<keyword id="KW-0066">ATP synthesis</keyword>
<keyword id="KW-0375">Hydrogen ion transport</keyword>
<keyword id="KW-0406">Ion transport</keyword>
<keyword id="KW-0813">Transport</keyword>
<evidence type="ECO:0000255" key="1">
    <source>
        <dbReference type="HAMAP-Rule" id="MF_00310"/>
    </source>
</evidence>
<sequence length="459" mass="51082">MLKEYRTVTEVVGPLMVVEGVEGVKYDELVEIELHTGEKRRGKVLEVNGSKAMVQIFEGSSGINLKGTKAKFLGRPLELGVSEDMLGRVFDGMGRPNDNGPDIIPEKRVDINGEAINPMARDFPSEFIQTGVSAIDGLNTLVRGQKLPVFSAAGLPHAELAAQIARQAKVLNSDSKFAIVFAAIGITFEEAQFFQDEFKRTGAIDRSVLFMNLASDPAIERIATPRMALTCAEYLAYEKGMQVLVIMTDITNYAEALREISAARKEVPGRRGYPGYLYTDLSTLYERAGRLRGKEGSITQIPILTMPEDDKTHPIPDLTGYITEGQIILSRELYKKGIMPPIDVLPSLSRLKDKGIGKGKTREDHADTMNQLFAAYSQGKQAKELSAILGESALSDTDKKLAKFAEAFEDEYVSQGFNTNRTIEETLNLGWKLLKMLPRTELKRIRDEYLEKYMPREEE</sequence>
<protein>
    <recommendedName>
        <fullName evidence="1">V-type ATP synthase beta chain</fullName>
    </recommendedName>
    <alternativeName>
        <fullName evidence="1">V-ATPase subunit B</fullName>
    </alternativeName>
</protein>